<gene>
    <name evidence="1" type="primary">cbiA</name>
    <name type="ordered locus">FN0972</name>
</gene>
<evidence type="ECO:0000255" key="1">
    <source>
        <dbReference type="HAMAP-Rule" id="MF_00027"/>
    </source>
</evidence>
<accession>Q8R659</accession>
<keyword id="KW-0067">ATP-binding</keyword>
<keyword id="KW-0169">Cobalamin biosynthesis</keyword>
<keyword id="KW-0315">Glutamine amidotransferase</keyword>
<keyword id="KW-0436">Ligase</keyword>
<keyword id="KW-0460">Magnesium</keyword>
<keyword id="KW-0547">Nucleotide-binding</keyword>
<keyword id="KW-1185">Reference proteome</keyword>
<reference key="1">
    <citation type="journal article" date="2002" name="J. Bacteriol.">
        <title>Genome sequence and analysis of the oral bacterium Fusobacterium nucleatum strain ATCC 25586.</title>
        <authorList>
            <person name="Kapatral V."/>
            <person name="Anderson I."/>
            <person name="Ivanova N."/>
            <person name="Reznik G."/>
            <person name="Los T."/>
            <person name="Lykidis A."/>
            <person name="Bhattacharyya A."/>
            <person name="Bartman A."/>
            <person name="Gardner W."/>
            <person name="Grechkin G."/>
            <person name="Zhu L."/>
            <person name="Vasieva O."/>
            <person name="Chu L."/>
            <person name="Kogan Y."/>
            <person name="Chaga O."/>
            <person name="Goltsman E."/>
            <person name="Bernal A."/>
            <person name="Larsen N."/>
            <person name="D'Souza M."/>
            <person name="Walunas T."/>
            <person name="Pusch G."/>
            <person name="Haselkorn R."/>
            <person name="Fonstein M."/>
            <person name="Kyrpides N.C."/>
            <person name="Overbeek R."/>
        </authorList>
    </citation>
    <scope>NUCLEOTIDE SEQUENCE [LARGE SCALE GENOMIC DNA]</scope>
    <source>
        <strain>ATCC 25586 / DSM 15643 / BCRC 10681 / CIP 101130 / JCM 8532 / KCTC 2640 / LMG 13131 / VPI 4355</strain>
    </source>
</reference>
<name>CBIA_FUSNN</name>
<feature type="chain" id="PRO_1000057225" description="Cobyrinate a,c-diamide synthase">
    <location>
        <begin position="1"/>
        <end position="444"/>
    </location>
</feature>
<feature type="domain" description="GATase cobBQ-type" evidence="1">
    <location>
        <begin position="250"/>
        <end position="438"/>
    </location>
</feature>
<feature type="active site" description="Nucleophile" evidence="1">
    <location>
        <position position="332"/>
    </location>
</feature>
<feature type="site" description="Increases nucleophilicity of active site Cys" evidence="1">
    <location>
        <position position="430"/>
    </location>
</feature>
<organism>
    <name type="scientific">Fusobacterium nucleatum subsp. nucleatum (strain ATCC 25586 / DSM 15643 / BCRC 10681 / CIP 101130 / JCM 8532 / KCTC 2640 / LMG 13131 / VPI 4355)</name>
    <dbReference type="NCBI Taxonomy" id="190304"/>
    <lineage>
        <taxon>Bacteria</taxon>
        <taxon>Fusobacteriati</taxon>
        <taxon>Fusobacteriota</taxon>
        <taxon>Fusobacteriia</taxon>
        <taxon>Fusobacteriales</taxon>
        <taxon>Fusobacteriaceae</taxon>
        <taxon>Fusobacterium</taxon>
    </lineage>
</organism>
<proteinExistence type="inferred from homology"/>
<dbReference type="EC" id="6.3.5.11" evidence="1"/>
<dbReference type="EMBL" id="AE009951">
    <property type="protein sequence ID" value="AAL95168.1"/>
    <property type="molecule type" value="Genomic_DNA"/>
</dbReference>
<dbReference type="RefSeq" id="NP_603869.1">
    <property type="nucleotide sequence ID" value="NC_003454.1"/>
</dbReference>
<dbReference type="RefSeq" id="WP_005901682.1">
    <property type="nucleotide sequence ID" value="NZ_OZ209243.1"/>
</dbReference>
<dbReference type="SMR" id="Q8R659"/>
<dbReference type="STRING" id="190304.FN0972"/>
<dbReference type="PaxDb" id="190304-FN0972"/>
<dbReference type="EnsemblBacteria" id="AAL95168">
    <property type="protein sequence ID" value="AAL95168"/>
    <property type="gene ID" value="FN0972"/>
</dbReference>
<dbReference type="KEGG" id="fnu:FN0972"/>
<dbReference type="PATRIC" id="fig|190304.8.peg.1537"/>
<dbReference type="eggNOG" id="COG1797">
    <property type="taxonomic scope" value="Bacteria"/>
</dbReference>
<dbReference type="HOGENOM" id="CLU_022752_2_0_0"/>
<dbReference type="InParanoid" id="Q8R659"/>
<dbReference type="BioCyc" id="FNUC190304:G1FZS-1554-MONOMER"/>
<dbReference type="UniPathway" id="UPA00148">
    <property type="reaction ID" value="UER00231"/>
</dbReference>
<dbReference type="Proteomes" id="UP000002521">
    <property type="component" value="Chromosome"/>
</dbReference>
<dbReference type="GO" id="GO:0005524">
    <property type="term" value="F:ATP binding"/>
    <property type="evidence" value="ECO:0007669"/>
    <property type="project" value="UniProtKB-UniRule"/>
</dbReference>
<dbReference type="GO" id="GO:0042242">
    <property type="term" value="F:cobyrinic acid a,c-diamide synthase activity"/>
    <property type="evidence" value="ECO:0007669"/>
    <property type="project" value="UniProtKB-UniRule"/>
</dbReference>
<dbReference type="GO" id="GO:0009236">
    <property type="term" value="P:cobalamin biosynthetic process"/>
    <property type="evidence" value="ECO:0007669"/>
    <property type="project" value="UniProtKB-UniRule"/>
</dbReference>
<dbReference type="CDD" id="cd05388">
    <property type="entry name" value="CobB_N"/>
    <property type="match status" value="1"/>
</dbReference>
<dbReference type="CDD" id="cd03130">
    <property type="entry name" value="GATase1_CobB"/>
    <property type="match status" value="1"/>
</dbReference>
<dbReference type="Gene3D" id="3.40.50.880">
    <property type="match status" value="1"/>
</dbReference>
<dbReference type="Gene3D" id="3.40.50.300">
    <property type="entry name" value="P-loop containing nucleotide triphosphate hydrolases"/>
    <property type="match status" value="1"/>
</dbReference>
<dbReference type="HAMAP" id="MF_00027">
    <property type="entry name" value="CobB_CbiA"/>
    <property type="match status" value="1"/>
</dbReference>
<dbReference type="InterPro" id="IPR004484">
    <property type="entry name" value="CbiA/CobB_synth"/>
</dbReference>
<dbReference type="InterPro" id="IPR029062">
    <property type="entry name" value="Class_I_gatase-like"/>
</dbReference>
<dbReference type="InterPro" id="IPR002586">
    <property type="entry name" value="CobQ/CobB/MinD/ParA_Nub-bd_dom"/>
</dbReference>
<dbReference type="InterPro" id="IPR011698">
    <property type="entry name" value="GATase_3"/>
</dbReference>
<dbReference type="InterPro" id="IPR027417">
    <property type="entry name" value="P-loop_NTPase"/>
</dbReference>
<dbReference type="NCBIfam" id="TIGR00379">
    <property type="entry name" value="cobB"/>
    <property type="match status" value="1"/>
</dbReference>
<dbReference type="NCBIfam" id="NF002204">
    <property type="entry name" value="PRK01077.1"/>
    <property type="match status" value="1"/>
</dbReference>
<dbReference type="PANTHER" id="PTHR43873">
    <property type="entry name" value="COBYRINATE A,C-DIAMIDE SYNTHASE"/>
    <property type="match status" value="1"/>
</dbReference>
<dbReference type="PANTHER" id="PTHR43873:SF1">
    <property type="entry name" value="COBYRINATE A,C-DIAMIDE SYNTHASE"/>
    <property type="match status" value="1"/>
</dbReference>
<dbReference type="Pfam" id="PF01656">
    <property type="entry name" value="CbiA"/>
    <property type="match status" value="1"/>
</dbReference>
<dbReference type="Pfam" id="PF07685">
    <property type="entry name" value="GATase_3"/>
    <property type="match status" value="1"/>
</dbReference>
<dbReference type="SUPFAM" id="SSF52317">
    <property type="entry name" value="Class I glutamine amidotransferase-like"/>
    <property type="match status" value="1"/>
</dbReference>
<dbReference type="SUPFAM" id="SSF52540">
    <property type="entry name" value="P-loop containing nucleoside triphosphate hydrolases"/>
    <property type="match status" value="1"/>
</dbReference>
<dbReference type="PROSITE" id="PS51274">
    <property type="entry name" value="GATASE_COBBQ"/>
    <property type="match status" value="1"/>
</dbReference>
<comment type="function">
    <text evidence="1">Catalyzes the ATP-dependent amidation of the two carboxylate groups at positions a and c of cobyrinate, using either L-glutamine or ammonia as the nitrogen source.</text>
</comment>
<comment type="catalytic activity">
    <reaction evidence="1">
        <text>cob(II)yrinate + 2 L-glutamine + 2 ATP + 2 H2O = cob(II)yrinate a,c diamide + 2 L-glutamate + 2 ADP + 2 phosphate + 2 H(+)</text>
        <dbReference type="Rhea" id="RHEA:26289"/>
        <dbReference type="ChEBI" id="CHEBI:15377"/>
        <dbReference type="ChEBI" id="CHEBI:15378"/>
        <dbReference type="ChEBI" id="CHEBI:29985"/>
        <dbReference type="ChEBI" id="CHEBI:30616"/>
        <dbReference type="ChEBI" id="CHEBI:43474"/>
        <dbReference type="ChEBI" id="CHEBI:58359"/>
        <dbReference type="ChEBI" id="CHEBI:58537"/>
        <dbReference type="ChEBI" id="CHEBI:58894"/>
        <dbReference type="ChEBI" id="CHEBI:456216"/>
        <dbReference type="EC" id="6.3.5.11"/>
    </reaction>
</comment>
<comment type="cofactor">
    <cofactor evidence="1">
        <name>Mg(2+)</name>
        <dbReference type="ChEBI" id="CHEBI:18420"/>
    </cofactor>
</comment>
<comment type="pathway">
    <text evidence="1">Cofactor biosynthesis; adenosylcobalamin biosynthesis; cob(II)yrinate a,c-diamide from sirohydrochlorin (anaerobic route): step 10/10.</text>
</comment>
<comment type="domain">
    <text evidence="1">Comprises of two domains. The C-terminal domain contains the binding site for glutamine and catalyzes the hydrolysis of this substrate to glutamate and ammonia. The N-terminal domain is anticipated to bind ATP and cobyrinate and catalyzes the ultimate synthesis of the diamide product. The ammonia produced via the glutaminase domain is probably translocated to the adjacent domain via a molecular tunnel, where it reacts with an activated intermediate.</text>
</comment>
<comment type="miscellaneous">
    <text evidence="1">The a and c carboxylates of cobyrinate are activated for nucleophilic attack via formation of a phosphorylated intermediate by ATP. CbiA catalyzes first the amidation of the c-carboxylate, and then that of the a-carboxylate.</text>
</comment>
<comment type="similarity">
    <text evidence="1">Belongs to the CobB/CbiA family.</text>
</comment>
<sequence>MKAFMLAGVSSGIGKTTISMALMSVFNNVSPFKVGPDYIDPGFHEFITGNKSYNLDIFMMGEQGVKYSFYKHHKDISIIEGVMGLYDGMDNSLDNNSSAHIARFLGVPVILVLDGVGKSTSIAAQVLGYKMLDPRVNISGVIINKVSSAKTYAIFKEAIEKYTGVKCLGFVEKNDKLNISSQHLGLLQASEVEDLREKLSILKNLVLQNIDLKEIEKIASEQTRTFNENETEIEPPLYISYLKDRYVGKIIAIAQDRAFSFYYNDNIEFLEYMGFKVKYFSPLKDSKVPECDIIYLGGGYPENFAEELSNNKEMFNSIRKNYEQGKNILAECGGFMYLSNGIEQIEGKVYQMCGLVPCVVNMTNRLDISRFGYILINNKNDIEIARGHEFHYSKLKAVLEDTRKFKAVKKDGRTWECIFNEKNLYAGYPHIHFFGSYKFIEEVF</sequence>
<protein>
    <recommendedName>
        <fullName evidence="1">Cobyrinate a,c-diamide synthase</fullName>
        <ecNumber evidence="1">6.3.5.11</ecNumber>
    </recommendedName>
    <alternativeName>
        <fullName evidence="1">Cobyrinic acid a,c-diamide synthetase</fullName>
    </alternativeName>
</protein>